<keyword id="KW-0004">4Fe-4S</keyword>
<keyword id="KW-0408">Iron</keyword>
<keyword id="KW-0411">Iron-sulfur</keyword>
<keyword id="KW-0479">Metal-binding</keyword>
<keyword id="KW-0949">S-adenosyl-L-methionine</keyword>
<gene>
    <name type="ordered locus">CLM_0251</name>
</gene>
<protein>
    <recommendedName>
        <fullName evidence="1">UPF0313 protein CLM_0251</fullName>
    </recommendedName>
</protein>
<organism>
    <name type="scientific">Clostridium botulinum (strain Kyoto / Type A2)</name>
    <dbReference type="NCBI Taxonomy" id="536232"/>
    <lineage>
        <taxon>Bacteria</taxon>
        <taxon>Bacillati</taxon>
        <taxon>Bacillota</taxon>
        <taxon>Clostridia</taxon>
        <taxon>Eubacteriales</taxon>
        <taxon>Clostridiaceae</taxon>
        <taxon>Clostridium</taxon>
    </lineage>
</organism>
<name>Y251_CLOBJ</name>
<comment type="cofactor">
    <cofactor evidence="1">
        <name>[4Fe-4S] cluster</name>
        <dbReference type="ChEBI" id="CHEBI:49883"/>
    </cofactor>
    <text evidence="1">Binds 1 [4Fe-4S] cluster. The cluster is coordinated with 3 cysteines and an exchangeable S-adenosyl-L-methionine.</text>
</comment>
<comment type="similarity">
    <text evidence="1">Belongs to the UPF0313 family.</text>
</comment>
<reference key="1">
    <citation type="submission" date="2008-10" db="EMBL/GenBank/DDBJ databases">
        <title>Genome sequence of Clostridium botulinum A2 Kyoto.</title>
        <authorList>
            <person name="Shrivastava S."/>
            <person name="Brinkac L.M."/>
            <person name="Brown J.L."/>
            <person name="Bruce D."/>
            <person name="Detter C.C."/>
            <person name="Johnson E.A."/>
            <person name="Munk C.A."/>
            <person name="Smith L.A."/>
            <person name="Smith T.J."/>
            <person name="Sutton G."/>
            <person name="Brettin T.S."/>
        </authorList>
    </citation>
    <scope>NUCLEOTIDE SEQUENCE [LARGE SCALE GENOMIC DNA]</scope>
    <source>
        <strain>Kyoto / Type A2</strain>
    </source>
</reference>
<sequence>MSNMDFLPISKEDLKKRNIDVLDFIIVTGDAYVDHPSFGTAIIGRVLEREGFTVGIIAQPNWNNIEDFKKLGKPKYGFLVNSGNIDSMVNHYTASKKKRHDDFYSPGGKSGYRPDRAVIVYCNKIKEAFKDSPIIIGGIEASLRRFAHYDYWDNSVRRSILEDSSADLLIYGMGEKPIVQVSNLLRYGMKIDSIKNVRGTTYIEKDISSLKDYIEIPSFEEVSTNKKSYAEAYKIQYYEQDSIRGKTLVQKHKERYVVQNPPQPPLSQEEMDEVYALPYARTYHPMYEAEGGIPAIKEVKFSITSHRGCYGSCSFCALTFHQGRVIQNRSQDSILKEANMMTNMKDFKGYIHDVGGPTANFRHRACKVQEKHGTCKNKQCVFPKACKNLIVDHKEYLSLLRKIRKIPNVKKVFIRSGIRFDYLMYDKNDEFFKELCEHHISGQLKVAPEHISDKVLNLMGKPTRNVYDSFVKKYYDINKKIHKNQFLVPYLMSSHPGSDLKAAIELAQYIKKMGYTPEQVQDFYPTPGSLSTTMYYTGINPLTEEKVYIPKDQKEKRMQRALLQFSIHDNYDLVKEALIKAHREDLIGNGPDCLIPYNKPYKKSHKKNNAKNNNNHYNKNNNYNKNKDISKKNKKNSLSKHKKRK</sequence>
<accession>C1FQT8</accession>
<evidence type="ECO:0000255" key="1">
    <source>
        <dbReference type="HAMAP-Rule" id="MF_01251"/>
    </source>
</evidence>
<evidence type="ECO:0000255" key="2">
    <source>
        <dbReference type="PROSITE-ProRule" id="PRU01266"/>
    </source>
</evidence>
<evidence type="ECO:0000256" key="3">
    <source>
        <dbReference type="SAM" id="MobiDB-lite"/>
    </source>
</evidence>
<proteinExistence type="inferred from homology"/>
<feature type="chain" id="PRO_1000165087" description="UPF0313 protein CLM_0251">
    <location>
        <begin position="1"/>
        <end position="645"/>
    </location>
</feature>
<feature type="domain" description="Radical SAM core" evidence="2">
    <location>
        <begin position="295"/>
        <end position="566"/>
    </location>
</feature>
<feature type="region of interest" description="Disordered" evidence="3">
    <location>
        <begin position="598"/>
        <end position="645"/>
    </location>
</feature>
<feature type="compositionally biased region" description="Basic residues" evidence="3">
    <location>
        <begin position="600"/>
        <end position="609"/>
    </location>
</feature>
<feature type="compositionally biased region" description="Low complexity" evidence="3">
    <location>
        <begin position="610"/>
        <end position="624"/>
    </location>
</feature>
<feature type="compositionally biased region" description="Basic residues" evidence="3">
    <location>
        <begin position="632"/>
        <end position="645"/>
    </location>
</feature>
<feature type="binding site" evidence="1">
    <location>
        <position position="309"/>
    </location>
    <ligand>
        <name>[4Fe-4S] cluster</name>
        <dbReference type="ChEBI" id="CHEBI:49883"/>
        <note>4Fe-4S-S-AdoMet</note>
    </ligand>
</feature>
<feature type="binding site" evidence="1">
    <location>
        <position position="313"/>
    </location>
    <ligand>
        <name>[4Fe-4S] cluster</name>
        <dbReference type="ChEBI" id="CHEBI:49883"/>
        <note>4Fe-4S-S-AdoMet</note>
    </ligand>
</feature>
<feature type="binding site" evidence="1">
    <location>
        <position position="316"/>
    </location>
    <ligand>
        <name>[4Fe-4S] cluster</name>
        <dbReference type="ChEBI" id="CHEBI:49883"/>
        <note>4Fe-4S-S-AdoMet</note>
    </ligand>
</feature>
<dbReference type="EMBL" id="CP001581">
    <property type="protein sequence ID" value="ACO87244.1"/>
    <property type="molecule type" value="Genomic_DNA"/>
</dbReference>
<dbReference type="RefSeq" id="WP_011948014.1">
    <property type="nucleotide sequence ID" value="NC_012563.1"/>
</dbReference>
<dbReference type="KEGG" id="cby:CLM_0251"/>
<dbReference type="eggNOG" id="COG1032">
    <property type="taxonomic scope" value="Bacteria"/>
</dbReference>
<dbReference type="HOGENOM" id="CLU_018288_2_0_9"/>
<dbReference type="Proteomes" id="UP000001374">
    <property type="component" value="Chromosome"/>
</dbReference>
<dbReference type="GO" id="GO:0051539">
    <property type="term" value="F:4 iron, 4 sulfur cluster binding"/>
    <property type="evidence" value="ECO:0007669"/>
    <property type="project" value="UniProtKB-KW"/>
</dbReference>
<dbReference type="GO" id="GO:0003824">
    <property type="term" value="F:catalytic activity"/>
    <property type="evidence" value="ECO:0007669"/>
    <property type="project" value="InterPro"/>
</dbReference>
<dbReference type="GO" id="GO:0005506">
    <property type="term" value="F:iron ion binding"/>
    <property type="evidence" value="ECO:0007669"/>
    <property type="project" value="UniProtKB-UniRule"/>
</dbReference>
<dbReference type="Gene3D" id="3.80.30.20">
    <property type="entry name" value="tm_1862 like domain"/>
    <property type="match status" value="1"/>
</dbReference>
<dbReference type="HAMAP" id="MF_01251">
    <property type="entry name" value="UPF0313"/>
    <property type="match status" value="1"/>
</dbReference>
<dbReference type="InterPro" id="IPR006638">
    <property type="entry name" value="Elp3/MiaA/NifB-like_rSAM"/>
</dbReference>
<dbReference type="InterPro" id="IPR007197">
    <property type="entry name" value="rSAM"/>
</dbReference>
<dbReference type="InterPro" id="IPR023404">
    <property type="entry name" value="rSAM_horseshoe"/>
</dbReference>
<dbReference type="InterPro" id="IPR022946">
    <property type="entry name" value="UPF0313"/>
</dbReference>
<dbReference type="InterPro" id="IPR024560">
    <property type="entry name" value="UPF0313_C"/>
</dbReference>
<dbReference type="InterPro" id="IPR013704">
    <property type="entry name" value="UPF0313_N"/>
</dbReference>
<dbReference type="NCBIfam" id="TIGR03904">
    <property type="entry name" value="SAM_YgiQ"/>
    <property type="match status" value="1"/>
</dbReference>
<dbReference type="PANTHER" id="PTHR32331">
    <property type="entry name" value="UPF0313 PROTEIN YGIQ"/>
    <property type="match status" value="1"/>
</dbReference>
<dbReference type="PANTHER" id="PTHR32331:SF0">
    <property type="entry name" value="UPF0313 PROTEIN YGIQ"/>
    <property type="match status" value="1"/>
</dbReference>
<dbReference type="Pfam" id="PF11842">
    <property type="entry name" value="DUF3362"/>
    <property type="match status" value="1"/>
</dbReference>
<dbReference type="Pfam" id="PF04055">
    <property type="entry name" value="Radical_SAM"/>
    <property type="match status" value="1"/>
</dbReference>
<dbReference type="Pfam" id="PF08497">
    <property type="entry name" value="Radical_SAM_N"/>
    <property type="match status" value="1"/>
</dbReference>
<dbReference type="SFLD" id="SFLDG01082">
    <property type="entry name" value="B12-binding_domain_containing"/>
    <property type="match status" value="1"/>
</dbReference>
<dbReference type="SFLD" id="SFLDS00029">
    <property type="entry name" value="Radical_SAM"/>
    <property type="match status" value="1"/>
</dbReference>
<dbReference type="SFLD" id="SFLDG01069">
    <property type="entry name" value="UPF0313"/>
    <property type="match status" value="1"/>
</dbReference>
<dbReference type="SMART" id="SM00729">
    <property type="entry name" value="Elp3"/>
    <property type="match status" value="1"/>
</dbReference>
<dbReference type="SUPFAM" id="SSF102114">
    <property type="entry name" value="Radical SAM enzymes"/>
    <property type="match status" value="1"/>
</dbReference>
<dbReference type="PROSITE" id="PS51918">
    <property type="entry name" value="RADICAL_SAM"/>
    <property type="match status" value="1"/>
</dbReference>